<comment type="caution">
    <text evidence="1">Could be the product of a pseudogene.</text>
</comment>
<evidence type="ECO:0000305" key="1"/>
<organism>
    <name type="scientific">Escherichia coli (strain K12)</name>
    <dbReference type="NCBI Taxonomy" id="83333"/>
    <lineage>
        <taxon>Bacteria</taxon>
        <taxon>Pseudomonadati</taxon>
        <taxon>Pseudomonadota</taxon>
        <taxon>Gammaproteobacteria</taxon>
        <taxon>Enterobacterales</taxon>
        <taxon>Enterobacteriaceae</taxon>
        <taxon>Escherichia</taxon>
    </lineage>
</organism>
<gene>
    <name type="primary">cysX</name>
</gene>
<accession>P20343</accession>
<proteinExistence type="uncertain"/>
<reference key="1">
    <citation type="journal article" date="1990" name="Biochem. Biophys. Res. Commun.">
        <title>Structure and expression of cysX, the second gene in the Escherichia coli K-12 cysE locus.</title>
        <authorList>
            <person name="Tei H."/>
            <person name="Murata K."/>
            <person name="Kimura A."/>
        </authorList>
    </citation>
    <scope>NUCLEOTIDE SEQUENCE [GENOMIC DNA]</scope>
    <source>
        <strain>K12</strain>
    </source>
</reference>
<dbReference type="EMBL" id="M34333">
    <property type="protein sequence ID" value="AAA23660.1"/>
    <property type="molecule type" value="Genomic_DNA"/>
</dbReference>
<dbReference type="PIR" id="B34563">
    <property type="entry name" value="B34563"/>
</dbReference>
<feature type="chain" id="PRO_0000169844" description="Putative uncharacterized protein CysX">
    <location>
        <begin position="1"/>
        <end position="130"/>
    </location>
</feature>
<name>CYSX_ECOLI</name>
<protein>
    <recommendedName>
        <fullName>Putative uncharacterized protein CysX</fullName>
    </recommendedName>
</protein>
<sequence>MRRHRLQHHGTCANLRAAPNFNIAEDFRARANHHTFTNFRVTVTTRFTRTAKRHRLQNRYVVFNHRRFTNDDACRVVKHDTATNFCCRVNIDLERHRNLVLQKDCQCATPLIPQPVTDAIGLQGMKTLQV</sequence>